<accession>Q2SLT3</accession>
<sequence length="386" mass="41761">MSEYSIFTSESVSEGHPDKMADQISDAILDAIIKDDPNARVAVETLVKTGMAVIAGEVRTNTYVDLEDIVRSVILDIGYNSSDVGFDGASCAVLNAIGKQSGDIAMGVDEASEKDLGAGDQGLMFGYATNETDVLMPAPIYYSHRLVERQAYLRKNSILPWLRPDAKSQVTLRYENGKPVAVEAVVLSTQHTPDVKQSDIREAVMEEIIKHVLPEEWLHSNTQYHINPTGQFIIGGPVGDCGLTGRKIIVDTYGGMARHGGGAFSGKDPSKVDRSAAYAGRYVAKNIVASGLAAKCEIQVSYAIGVSEPTSISVNTFGTGKISDDKIATLVREHFDLRPRGLIDMLDLKRPIYRPTASYGHFGRTGDSFSWERTDKADALRAAAGI</sequence>
<keyword id="KW-0067">ATP-binding</keyword>
<keyword id="KW-0963">Cytoplasm</keyword>
<keyword id="KW-0460">Magnesium</keyword>
<keyword id="KW-0479">Metal-binding</keyword>
<keyword id="KW-0547">Nucleotide-binding</keyword>
<keyword id="KW-0554">One-carbon metabolism</keyword>
<keyword id="KW-0630">Potassium</keyword>
<keyword id="KW-1185">Reference proteome</keyword>
<keyword id="KW-0808">Transferase</keyword>
<name>METK_HAHCH</name>
<evidence type="ECO:0000255" key="1">
    <source>
        <dbReference type="HAMAP-Rule" id="MF_00086"/>
    </source>
</evidence>
<dbReference type="EC" id="2.5.1.6" evidence="1"/>
<dbReference type="EMBL" id="CP000155">
    <property type="protein sequence ID" value="ABC28391.1"/>
    <property type="molecule type" value="Genomic_DNA"/>
</dbReference>
<dbReference type="RefSeq" id="WP_011395464.1">
    <property type="nucleotide sequence ID" value="NC_007645.1"/>
</dbReference>
<dbReference type="SMR" id="Q2SLT3"/>
<dbReference type="STRING" id="349521.HCH_01533"/>
<dbReference type="KEGG" id="hch:HCH_01533"/>
<dbReference type="eggNOG" id="COG0192">
    <property type="taxonomic scope" value="Bacteria"/>
</dbReference>
<dbReference type="HOGENOM" id="CLU_041802_1_1_6"/>
<dbReference type="OrthoDB" id="9801686at2"/>
<dbReference type="UniPathway" id="UPA00315">
    <property type="reaction ID" value="UER00080"/>
</dbReference>
<dbReference type="Proteomes" id="UP000000238">
    <property type="component" value="Chromosome"/>
</dbReference>
<dbReference type="GO" id="GO:0005737">
    <property type="term" value="C:cytoplasm"/>
    <property type="evidence" value="ECO:0007669"/>
    <property type="project" value="UniProtKB-SubCell"/>
</dbReference>
<dbReference type="GO" id="GO:0005524">
    <property type="term" value="F:ATP binding"/>
    <property type="evidence" value="ECO:0007669"/>
    <property type="project" value="UniProtKB-UniRule"/>
</dbReference>
<dbReference type="GO" id="GO:0000287">
    <property type="term" value="F:magnesium ion binding"/>
    <property type="evidence" value="ECO:0007669"/>
    <property type="project" value="UniProtKB-UniRule"/>
</dbReference>
<dbReference type="GO" id="GO:0004478">
    <property type="term" value="F:methionine adenosyltransferase activity"/>
    <property type="evidence" value="ECO:0007669"/>
    <property type="project" value="UniProtKB-UniRule"/>
</dbReference>
<dbReference type="GO" id="GO:0006730">
    <property type="term" value="P:one-carbon metabolic process"/>
    <property type="evidence" value="ECO:0007669"/>
    <property type="project" value="UniProtKB-KW"/>
</dbReference>
<dbReference type="GO" id="GO:0006556">
    <property type="term" value="P:S-adenosylmethionine biosynthetic process"/>
    <property type="evidence" value="ECO:0007669"/>
    <property type="project" value="UniProtKB-UniRule"/>
</dbReference>
<dbReference type="CDD" id="cd18079">
    <property type="entry name" value="S-AdoMet_synt"/>
    <property type="match status" value="1"/>
</dbReference>
<dbReference type="FunFam" id="3.30.300.10:FF:000003">
    <property type="entry name" value="S-adenosylmethionine synthase"/>
    <property type="match status" value="1"/>
</dbReference>
<dbReference type="FunFam" id="3.30.300.10:FF:000004">
    <property type="entry name" value="S-adenosylmethionine synthase"/>
    <property type="match status" value="1"/>
</dbReference>
<dbReference type="Gene3D" id="3.30.300.10">
    <property type="match status" value="3"/>
</dbReference>
<dbReference type="HAMAP" id="MF_00086">
    <property type="entry name" value="S_AdoMet_synth1"/>
    <property type="match status" value="1"/>
</dbReference>
<dbReference type="InterPro" id="IPR022631">
    <property type="entry name" value="ADOMET_SYNTHASE_CS"/>
</dbReference>
<dbReference type="InterPro" id="IPR022630">
    <property type="entry name" value="S-AdoMet_synt_C"/>
</dbReference>
<dbReference type="InterPro" id="IPR022629">
    <property type="entry name" value="S-AdoMet_synt_central"/>
</dbReference>
<dbReference type="InterPro" id="IPR022628">
    <property type="entry name" value="S-AdoMet_synt_N"/>
</dbReference>
<dbReference type="InterPro" id="IPR002133">
    <property type="entry name" value="S-AdoMet_synthetase"/>
</dbReference>
<dbReference type="InterPro" id="IPR022636">
    <property type="entry name" value="S-AdoMet_synthetase_sfam"/>
</dbReference>
<dbReference type="NCBIfam" id="TIGR01034">
    <property type="entry name" value="metK"/>
    <property type="match status" value="1"/>
</dbReference>
<dbReference type="PANTHER" id="PTHR11964">
    <property type="entry name" value="S-ADENOSYLMETHIONINE SYNTHETASE"/>
    <property type="match status" value="1"/>
</dbReference>
<dbReference type="Pfam" id="PF02773">
    <property type="entry name" value="S-AdoMet_synt_C"/>
    <property type="match status" value="1"/>
</dbReference>
<dbReference type="Pfam" id="PF02772">
    <property type="entry name" value="S-AdoMet_synt_M"/>
    <property type="match status" value="1"/>
</dbReference>
<dbReference type="Pfam" id="PF00438">
    <property type="entry name" value="S-AdoMet_synt_N"/>
    <property type="match status" value="1"/>
</dbReference>
<dbReference type="PIRSF" id="PIRSF000497">
    <property type="entry name" value="MAT"/>
    <property type="match status" value="1"/>
</dbReference>
<dbReference type="SUPFAM" id="SSF55973">
    <property type="entry name" value="S-adenosylmethionine synthetase"/>
    <property type="match status" value="3"/>
</dbReference>
<dbReference type="PROSITE" id="PS00376">
    <property type="entry name" value="ADOMET_SYNTHASE_1"/>
    <property type="match status" value="1"/>
</dbReference>
<dbReference type="PROSITE" id="PS00377">
    <property type="entry name" value="ADOMET_SYNTHASE_2"/>
    <property type="match status" value="1"/>
</dbReference>
<reference key="1">
    <citation type="journal article" date="2005" name="Nucleic Acids Res.">
        <title>Genomic blueprint of Hahella chejuensis, a marine microbe producing an algicidal agent.</title>
        <authorList>
            <person name="Jeong H."/>
            <person name="Yim J.H."/>
            <person name="Lee C."/>
            <person name="Choi S.-H."/>
            <person name="Park Y.K."/>
            <person name="Yoon S.H."/>
            <person name="Hur C.-G."/>
            <person name="Kang H.-Y."/>
            <person name="Kim D."/>
            <person name="Lee H.H."/>
            <person name="Park K.H."/>
            <person name="Park S.-H."/>
            <person name="Park H.-S."/>
            <person name="Lee H.K."/>
            <person name="Oh T.K."/>
            <person name="Kim J.F."/>
        </authorList>
    </citation>
    <scope>NUCLEOTIDE SEQUENCE [LARGE SCALE GENOMIC DNA]</scope>
    <source>
        <strain>KCTC 2396</strain>
    </source>
</reference>
<organism>
    <name type="scientific">Hahella chejuensis (strain KCTC 2396)</name>
    <dbReference type="NCBI Taxonomy" id="349521"/>
    <lineage>
        <taxon>Bacteria</taxon>
        <taxon>Pseudomonadati</taxon>
        <taxon>Pseudomonadota</taxon>
        <taxon>Gammaproteobacteria</taxon>
        <taxon>Oceanospirillales</taxon>
        <taxon>Hahellaceae</taxon>
        <taxon>Hahella</taxon>
    </lineage>
</organism>
<protein>
    <recommendedName>
        <fullName evidence="1">S-adenosylmethionine synthase</fullName>
        <shortName evidence="1">AdoMet synthase</shortName>
        <ecNumber evidence="1">2.5.1.6</ecNumber>
    </recommendedName>
    <alternativeName>
        <fullName evidence="1">MAT</fullName>
    </alternativeName>
    <alternativeName>
        <fullName evidence="1">Methionine adenosyltransferase</fullName>
    </alternativeName>
</protein>
<comment type="function">
    <text evidence="1">Catalyzes the formation of S-adenosylmethionine (AdoMet) from methionine and ATP. The overall synthetic reaction is composed of two sequential steps, AdoMet formation and the subsequent tripolyphosphate hydrolysis which occurs prior to release of AdoMet from the enzyme.</text>
</comment>
<comment type="catalytic activity">
    <reaction evidence="1">
        <text>L-methionine + ATP + H2O = S-adenosyl-L-methionine + phosphate + diphosphate</text>
        <dbReference type="Rhea" id="RHEA:21080"/>
        <dbReference type="ChEBI" id="CHEBI:15377"/>
        <dbReference type="ChEBI" id="CHEBI:30616"/>
        <dbReference type="ChEBI" id="CHEBI:33019"/>
        <dbReference type="ChEBI" id="CHEBI:43474"/>
        <dbReference type="ChEBI" id="CHEBI:57844"/>
        <dbReference type="ChEBI" id="CHEBI:59789"/>
        <dbReference type="EC" id="2.5.1.6"/>
    </reaction>
</comment>
<comment type="cofactor">
    <cofactor evidence="1">
        <name>Mg(2+)</name>
        <dbReference type="ChEBI" id="CHEBI:18420"/>
    </cofactor>
    <text evidence="1">Binds 2 divalent ions per subunit.</text>
</comment>
<comment type="cofactor">
    <cofactor evidence="1">
        <name>K(+)</name>
        <dbReference type="ChEBI" id="CHEBI:29103"/>
    </cofactor>
    <text evidence="1">Binds 1 potassium ion per subunit.</text>
</comment>
<comment type="pathway">
    <text evidence="1">Amino-acid biosynthesis; S-adenosyl-L-methionine biosynthesis; S-adenosyl-L-methionine from L-methionine: step 1/1.</text>
</comment>
<comment type="subunit">
    <text evidence="1">Homotetramer; dimer of dimers.</text>
</comment>
<comment type="subcellular location">
    <subcellularLocation>
        <location evidence="1">Cytoplasm</location>
    </subcellularLocation>
</comment>
<comment type="similarity">
    <text evidence="1">Belongs to the AdoMet synthase family.</text>
</comment>
<feature type="chain" id="PRO_0000241000" description="S-adenosylmethionine synthase">
    <location>
        <begin position="1"/>
        <end position="386"/>
    </location>
</feature>
<feature type="region of interest" description="Flexible loop" evidence="1">
    <location>
        <begin position="100"/>
        <end position="110"/>
    </location>
</feature>
<feature type="binding site" description="in other chain" evidence="1">
    <location>
        <position position="16"/>
    </location>
    <ligand>
        <name>ATP</name>
        <dbReference type="ChEBI" id="CHEBI:30616"/>
        <note>ligand shared between two neighboring subunits</note>
    </ligand>
</feature>
<feature type="binding site" evidence="1">
    <location>
        <position position="18"/>
    </location>
    <ligand>
        <name>Mg(2+)</name>
        <dbReference type="ChEBI" id="CHEBI:18420"/>
    </ligand>
</feature>
<feature type="binding site" evidence="1">
    <location>
        <position position="44"/>
    </location>
    <ligand>
        <name>K(+)</name>
        <dbReference type="ChEBI" id="CHEBI:29103"/>
    </ligand>
</feature>
<feature type="binding site" description="in other chain" evidence="1">
    <location>
        <position position="57"/>
    </location>
    <ligand>
        <name>L-methionine</name>
        <dbReference type="ChEBI" id="CHEBI:57844"/>
        <note>ligand shared between two neighboring subunits</note>
    </ligand>
</feature>
<feature type="binding site" description="in other chain" evidence="1">
    <location>
        <position position="100"/>
    </location>
    <ligand>
        <name>L-methionine</name>
        <dbReference type="ChEBI" id="CHEBI:57844"/>
        <note>ligand shared between two neighboring subunits</note>
    </ligand>
</feature>
<feature type="binding site" description="in other chain" evidence="1">
    <location>
        <begin position="165"/>
        <end position="167"/>
    </location>
    <ligand>
        <name>ATP</name>
        <dbReference type="ChEBI" id="CHEBI:30616"/>
        <note>ligand shared between two neighboring subunits</note>
    </ligand>
</feature>
<feature type="binding site" evidence="1">
    <location>
        <position position="240"/>
    </location>
    <ligand>
        <name>ATP</name>
        <dbReference type="ChEBI" id="CHEBI:30616"/>
        <note>ligand shared between two neighboring subunits</note>
    </ligand>
</feature>
<feature type="binding site" evidence="1">
    <location>
        <position position="240"/>
    </location>
    <ligand>
        <name>L-methionine</name>
        <dbReference type="ChEBI" id="CHEBI:57844"/>
        <note>ligand shared between two neighboring subunits</note>
    </ligand>
</feature>
<feature type="binding site" description="in other chain" evidence="1">
    <location>
        <begin position="246"/>
        <end position="247"/>
    </location>
    <ligand>
        <name>ATP</name>
        <dbReference type="ChEBI" id="CHEBI:30616"/>
        <note>ligand shared between two neighboring subunits</note>
    </ligand>
</feature>
<feature type="binding site" evidence="1">
    <location>
        <position position="263"/>
    </location>
    <ligand>
        <name>ATP</name>
        <dbReference type="ChEBI" id="CHEBI:30616"/>
        <note>ligand shared between two neighboring subunits</note>
    </ligand>
</feature>
<feature type="binding site" evidence="1">
    <location>
        <position position="267"/>
    </location>
    <ligand>
        <name>ATP</name>
        <dbReference type="ChEBI" id="CHEBI:30616"/>
        <note>ligand shared between two neighboring subunits</note>
    </ligand>
</feature>
<feature type="binding site" description="in other chain" evidence="1">
    <location>
        <position position="271"/>
    </location>
    <ligand>
        <name>L-methionine</name>
        <dbReference type="ChEBI" id="CHEBI:57844"/>
        <note>ligand shared between two neighboring subunits</note>
    </ligand>
</feature>
<gene>
    <name evidence="1" type="primary">metK</name>
    <name type="ordered locus">HCH_01533</name>
</gene>
<proteinExistence type="inferred from homology"/>